<reference key="1">
    <citation type="journal article" date="2004" name="PLoS Biol.">
        <title>Phylogenomics of the reproductive parasite Wolbachia pipientis wMel: a streamlined genome overrun by mobile genetic elements.</title>
        <authorList>
            <person name="Wu M."/>
            <person name="Sun L.V."/>
            <person name="Vamathevan J.J."/>
            <person name="Riegler M."/>
            <person name="DeBoy R.T."/>
            <person name="Brownlie J.C."/>
            <person name="McGraw E.A."/>
            <person name="Martin W."/>
            <person name="Esser C."/>
            <person name="Ahmadinejad N."/>
            <person name="Wiegand C."/>
            <person name="Madupu R."/>
            <person name="Beanan M.J."/>
            <person name="Brinkac L.M."/>
            <person name="Daugherty S.C."/>
            <person name="Durkin A.S."/>
            <person name="Kolonay J.F."/>
            <person name="Nelson W.C."/>
            <person name="Mohamoud Y."/>
            <person name="Lee P."/>
            <person name="Berry K.J."/>
            <person name="Young M.B."/>
            <person name="Utterback T.R."/>
            <person name="Weidman J.F."/>
            <person name="Nierman W.C."/>
            <person name="Paulsen I.T."/>
            <person name="Nelson K.E."/>
            <person name="Tettelin H."/>
            <person name="O'Neill S.L."/>
            <person name="Eisen J.A."/>
        </authorList>
    </citation>
    <scope>NUCLEOTIDE SEQUENCE [LARGE SCALE GENOMIC DNA]</scope>
</reference>
<dbReference type="EC" id="6.1.1.16" evidence="1"/>
<dbReference type="EMBL" id="AE017196">
    <property type="protein sequence ID" value="AAS13901.1"/>
    <property type="molecule type" value="Genomic_DNA"/>
</dbReference>
<dbReference type="RefSeq" id="WP_010082300.1">
    <property type="nucleotide sequence ID" value="NZ_OX384529.1"/>
</dbReference>
<dbReference type="SMR" id="Q73IL1"/>
<dbReference type="EnsemblBacteria" id="AAS13901">
    <property type="protein sequence ID" value="AAS13901"/>
    <property type="gene ID" value="WD_0149"/>
</dbReference>
<dbReference type="GeneID" id="70035640"/>
<dbReference type="KEGG" id="wol:WD_0149"/>
<dbReference type="eggNOG" id="COG0215">
    <property type="taxonomic scope" value="Bacteria"/>
</dbReference>
<dbReference type="Proteomes" id="UP000008215">
    <property type="component" value="Chromosome"/>
</dbReference>
<dbReference type="GO" id="GO:0005829">
    <property type="term" value="C:cytosol"/>
    <property type="evidence" value="ECO:0007669"/>
    <property type="project" value="TreeGrafter"/>
</dbReference>
<dbReference type="GO" id="GO:0005524">
    <property type="term" value="F:ATP binding"/>
    <property type="evidence" value="ECO:0007669"/>
    <property type="project" value="UniProtKB-UniRule"/>
</dbReference>
<dbReference type="GO" id="GO:0004817">
    <property type="term" value="F:cysteine-tRNA ligase activity"/>
    <property type="evidence" value="ECO:0007669"/>
    <property type="project" value="UniProtKB-UniRule"/>
</dbReference>
<dbReference type="GO" id="GO:0008270">
    <property type="term" value="F:zinc ion binding"/>
    <property type="evidence" value="ECO:0007669"/>
    <property type="project" value="UniProtKB-UniRule"/>
</dbReference>
<dbReference type="GO" id="GO:0006423">
    <property type="term" value="P:cysteinyl-tRNA aminoacylation"/>
    <property type="evidence" value="ECO:0007669"/>
    <property type="project" value="UniProtKB-UniRule"/>
</dbReference>
<dbReference type="CDD" id="cd00672">
    <property type="entry name" value="CysRS_core"/>
    <property type="match status" value="1"/>
</dbReference>
<dbReference type="FunFam" id="3.40.50.620:FF:000068">
    <property type="entry name" value="Cysteine--tRNA ligase"/>
    <property type="match status" value="1"/>
</dbReference>
<dbReference type="Gene3D" id="1.20.120.1910">
    <property type="entry name" value="Cysteine-tRNA ligase, C-terminal anti-codon recognition domain"/>
    <property type="match status" value="1"/>
</dbReference>
<dbReference type="Gene3D" id="3.40.50.620">
    <property type="entry name" value="HUPs"/>
    <property type="match status" value="1"/>
</dbReference>
<dbReference type="HAMAP" id="MF_00041">
    <property type="entry name" value="Cys_tRNA_synth"/>
    <property type="match status" value="1"/>
</dbReference>
<dbReference type="InterPro" id="IPR015803">
    <property type="entry name" value="Cys-tRNA-ligase"/>
</dbReference>
<dbReference type="InterPro" id="IPR015273">
    <property type="entry name" value="Cys-tRNA-synt_Ia_DALR"/>
</dbReference>
<dbReference type="InterPro" id="IPR024909">
    <property type="entry name" value="Cys-tRNA/MSH_ligase"/>
</dbReference>
<dbReference type="InterPro" id="IPR014729">
    <property type="entry name" value="Rossmann-like_a/b/a_fold"/>
</dbReference>
<dbReference type="InterPro" id="IPR032678">
    <property type="entry name" value="tRNA-synt_1_cat_dom"/>
</dbReference>
<dbReference type="InterPro" id="IPR009080">
    <property type="entry name" value="tRNAsynth_Ia_anticodon-bd"/>
</dbReference>
<dbReference type="NCBIfam" id="TIGR00435">
    <property type="entry name" value="cysS"/>
    <property type="match status" value="1"/>
</dbReference>
<dbReference type="PANTHER" id="PTHR10890:SF3">
    <property type="entry name" value="CYSTEINE--TRNA LIGASE, CYTOPLASMIC"/>
    <property type="match status" value="1"/>
</dbReference>
<dbReference type="PANTHER" id="PTHR10890">
    <property type="entry name" value="CYSTEINYL-TRNA SYNTHETASE"/>
    <property type="match status" value="1"/>
</dbReference>
<dbReference type="Pfam" id="PF09190">
    <property type="entry name" value="DALR_2"/>
    <property type="match status" value="1"/>
</dbReference>
<dbReference type="Pfam" id="PF01406">
    <property type="entry name" value="tRNA-synt_1e"/>
    <property type="match status" value="1"/>
</dbReference>
<dbReference type="PRINTS" id="PR00983">
    <property type="entry name" value="TRNASYNTHCYS"/>
</dbReference>
<dbReference type="SMART" id="SM00840">
    <property type="entry name" value="DALR_2"/>
    <property type="match status" value="1"/>
</dbReference>
<dbReference type="SUPFAM" id="SSF47323">
    <property type="entry name" value="Anticodon-binding domain of a subclass of class I aminoacyl-tRNA synthetases"/>
    <property type="match status" value="1"/>
</dbReference>
<dbReference type="SUPFAM" id="SSF52374">
    <property type="entry name" value="Nucleotidylyl transferase"/>
    <property type="match status" value="1"/>
</dbReference>
<keyword id="KW-0030">Aminoacyl-tRNA synthetase</keyword>
<keyword id="KW-0067">ATP-binding</keyword>
<keyword id="KW-0963">Cytoplasm</keyword>
<keyword id="KW-0436">Ligase</keyword>
<keyword id="KW-0479">Metal-binding</keyword>
<keyword id="KW-0547">Nucleotide-binding</keyword>
<keyword id="KW-0648">Protein biosynthesis</keyword>
<keyword id="KW-0862">Zinc</keyword>
<sequence>MVRLYNTLTKKKELFTPIDKDHVKMYVCGPTVYDTAHIGNARSVVVYDVLFQLLKFCYGKVTYVRNITDIDDKIINAASEKNSNIESISTYYTKAFHEDMRSINCAEPTHEPKATKNVDYIIKLIEHLLQSGHAYESDKHVYFNIESYHEYGALSGKKTDELVPGSRVEVNENKKHPGDFVLWKPANDIDYKLSSYWNSPWGEGRPGWHIECSAMSYAYLGKDFDIHGGGIDLQFPHHENEIAQSKSAFAGSMFAKYWIHNGFLTVNEEKMSKSLFNIVKVRDLLDSGIKGEVIRYALLKTHYRKPLDWTENVISDAQETLNKFYRLSRGLDTINIDESNAEISKDFIDALKNDLNIPEALAILHEMAAKINKMSNESEKLKLTESFVKSARFIGLLESSYEKWFAVDVNHQEIERLIDLRKIAKKNKNYDTADKIRDQLKQMGITISDNEDGTTTW</sequence>
<comment type="catalytic activity">
    <reaction evidence="1">
        <text>tRNA(Cys) + L-cysteine + ATP = L-cysteinyl-tRNA(Cys) + AMP + diphosphate</text>
        <dbReference type="Rhea" id="RHEA:17773"/>
        <dbReference type="Rhea" id="RHEA-COMP:9661"/>
        <dbReference type="Rhea" id="RHEA-COMP:9679"/>
        <dbReference type="ChEBI" id="CHEBI:30616"/>
        <dbReference type="ChEBI" id="CHEBI:33019"/>
        <dbReference type="ChEBI" id="CHEBI:35235"/>
        <dbReference type="ChEBI" id="CHEBI:78442"/>
        <dbReference type="ChEBI" id="CHEBI:78517"/>
        <dbReference type="ChEBI" id="CHEBI:456215"/>
        <dbReference type="EC" id="6.1.1.16"/>
    </reaction>
</comment>
<comment type="cofactor">
    <cofactor evidence="1">
        <name>Zn(2+)</name>
        <dbReference type="ChEBI" id="CHEBI:29105"/>
    </cofactor>
    <text evidence="1">Binds 1 zinc ion per subunit.</text>
</comment>
<comment type="subunit">
    <text evidence="1">Monomer.</text>
</comment>
<comment type="subcellular location">
    <subcellularLocation>
        <location evidence="1">Cytoplasm</location>
    </subcellularLocation>
</comment>
<comment type="similarity">
    <text evidence="1">Belongs to the class-I aminoacyl-tRNA synthetase family.</text>
</comment>
<proteinExistence type="inferred from homology"/>
<accession>Q73IL1</accession>
<organism>
    <name type="scientific">Wolbachia pipientis wMel</name>
    <dbReference type="NCBI Taxonomy" id="163164"/>
    <lineage>
        <taxon>Bacteria</taxon>
        <taxon>Pseudomonadati</taxon>
        <taxon>Pseudomonadota</taxon>
        <taxon>Alphaproteobacteria</taxon>
        <taxon>Rickettsiales</taxon>
        <taxon>Anaplasmataceae</taxon>
        <taxon>Wolbachieae</taxon>
        <taxon>Wolbachia</taxon>
    </lineage>
</organism>
<gene>
    <name evidence="1" type="primary">cysS</name>
    <name type="ordered locus">WD_0149</name>
</gene>
<evidence type="ECO:0000255" key="1">
    <source>
        <dbReference type="HAMAP-Rule" id="MF_00041"/>
    </source>
</evidence>
<feature type="chain" id="PRO_0000159523" description="Cysteine--tRNA ligase">
    <location>
        <begin position="1"/>
        <end position="457"/>
    </location>
</feature>
<feature type="short sequence motif" description="'HIGH' region">
    <location>
        <begin position="30"/>
        <end position="40"/>
    </location>
</feature>
<feature type="short sequence motif" description="'KMSKS' region">
    <location>
        <begin position="270"/>
        <end position="274"/>
    </location>
</feature>
<feature type="binding site" evidence="1">
    <location>
        <position position="28"/>
    </location>
    <ligand>
        <name>Zn(2+)</name>
        <dbReference type="ChEBI" id="CHEBI:29105"/>
    </ligand>
</feature>
<feature type="binding site" evidence="1">
    <location>
        <position position="212"/>
    </location>
    <ligand>
        <name>Zn(2+)</name>
        <dbReference type="ChEBI" id="CHEBI:29105"/>
    </ligand>
</feature>
<feature type="binding site" evidence="1">
    <location>
        <position position="237"/>
    </location>
    <ligand>
        <name>Zn(2+)</name>
        <dbReference type="ChEBI" id="CHEBI:29105"/>
    </ligand>
</feature>
<feature type="binding site" evidence="1">
    <location>
        <position position="241"/>
    </location>
    <ligand>
        <name>Zn(2+)</name>
        <dbReference type="ChEBI" id="CHEBI:29105"/>
    </ligand>
</feature>
<feature type="binding site" evidence="1">
    <location>
        <position position="273"/>
    </location>
    <ligand>
        <name>ATP</name>
        <dbReference type="ChEBI" id="CHEBI:30616"/>
    </ligand>
</feature>
<name>SYC_WOLPM</name>
<protein>
    <recommendedName>
        <fullName evidence="1">Cysteine--tRNA ligase</fullName>
        <ecNumber evidence="1">6.1.1.16</ecNumber>
    </recommendedName>
    <alternativeName>
        <fullName evidence="1">Cysteinyl-tRNA synthetase</fullName>
        <shortName evidence="1">CysRS</shortName>
    </alternativeName>
</protein>